<keyword id="KW-0131">Cell cycle</keyword>
<keyword id="KW-0132">Cell division</keyword>
<feature type="chain" id="PRO_1000114229" description="Cell division topological specificity factor">
    <location>
        <begin position="1"/>
        <end position="95"/>
    </location>
</feature>
<name>MINE_METEP</name>
<sequence length="95" mass="10578">MSVLTFLKPRGSGSVARERLQLILAHERVENGRPDLIITLREEILNVIAKHVTVERDKVQIKLERGEGVSTLGVDIEFPVDAVIKPKAKTKRAIA</sequence>
<proteinExistence type="inferred from homology"/>
<dbReference type="EMBL" id="CP000908">
    <property type="protein sequence ID" value="ABY29671.1"/>
    <property type="molecule type" value="Genomic_DNA"/>
</dbReference>
<dbReference type="RefSeq" id="WP_012252904.1">
    <property type="nucleotide sequence ID" value="NC_010172.1"/>
</dbReference>
<dbReference type="SMR" id="A9W265"/>
<dbReference type="KEGG" id="mex:Mext_1269"/>
<dbReference type="eggNOG" id="COG0851">
    <property type="taxonomic scope" value="Bacteria"/>
</dbReference>
<dbReference type="HOGENOM" id="CLU_137929_2_0_5"/>
<dbReference type="BioCyc" id="MEXT419610:MEXT_RS06390-MONOMER"/>
<dbReference type="GO" id="GO:0051301">
    <property type="term" value="P:cell division"/>
    <property type="evidence" value="ECO:0007669"/>
    <property type="project" value="UniProtKB-KW"/>
</dbReference>
<dbReference type="GO" id="GO:0032955">
    <property type="term" value="P:regulation of division septum assembly"/>
    <property type="evidence" value="ECO:0007669"/>
    <property type="project" value="InterPro"/>
</dbReference>
<dbReference type="Gene3D" id="3.30.1070.10">
    <property type="entry name" value="Cell division topological specificity factor MinE"/>
    <property type="match status" value="1"/>
</dbReference>
<dbReference type="HAMAP" id="MF_00262">
    <property type="entry name" value="MinE"/>
    <property type="match status" value="1"/>
</dbReference>
<dbReference type="InterPro" id="IPR005527">
    <property type="entry name" value="MinE"/>
</dbReference>
<dbReference type="InterPro" id="IPR036707">
    <property type="entry name" value="MinE_sf"/>
</dbReference>
<dbReference type="NCBIfam" id="TIGR01215">
    <property type="entry name" value="minE"/>
    <property type="match status" value="1"/>
</dbReference>
<dbReference type="NCBIfam" id="NF001422">
    <property type="entry name" value="PRK00296.1"/>
    <property type="match status" value="1"/>
</dbReference>
<dbReference type="Pfam" id="PF03776">
    <property type="entry name" value="MinE"/>
    <property type="match status" value="1"/>
</dbReference>
<dbReference type="SUPFAM" id="SSF55229">
    <property type="entry name" value="Cell division protein MinE topological specificity domain"/>
    <property type="match status" value="1"/>
</dbReference>
<gene>
    <name evidence="1" type="primary">minE</name>
    <name type="ordered locus">Mext_1269</name>
</gene>
<comment type="function">
    <text evidence="1">Prevents the cell division inhibition by proteins MinC and MinD at internal division sites while permitting inhibition at polar sites. This ensures cell division at the proper site by restricting the formation of a division septum at the midpoint of the long axis of the cell.</text>
</comment>
<comment type="similarity">
    <text evidence="1">Belongs to the MinE family.</text>
</comment>
<protein>
    <recommendedName>
        <fullName evidence="1">Cell division topological specificity factor</fullName>
    </recommendedName>
</protein>
<evidence type="ECO:0000255" key="1">
    <source>
        <dbReference type="HAMAP-Rule" id="MF_00262"/>
    </source>
</evidence>
<organism>
    <name type="scientific">Methylorubrum extorquens (strain PA1)</name>
    <name type="common">Methylobacterium extorquens</name>
    <dbReference type="NCBI Taxonomy" id="419610"/>
    <lineage>
        <taxon>Bacteria</taxon>
        <taxon>Pseudomonadati</taxon>
        <taxon>Pseudomonadota</taxon>
        <taxon>Alphaproteobacteria</taxon>
        <taxon>Hyphomicrobiales</taxon>
        <taxon>Methylobacteriaceae</taxon>
        <taxon>Methylorubrum</taxon>
    </lineage>
</organism>
<accession>A9W265</accession>
<reference key="1">
    <citation type="submission" date="2007-12" db="EMBL/GenBank/DDBJ databases">
        <title>Complete sequence of Methylobacterium extorquens PA1.</title>
        <authorList>
            <consortium name="US DOE Joint Genome Institute"/>
            <person name="Copeland A."/>
            <person name="Lucas S."/>
            <person name="Lapidus A."/>
            <person name="Barry K."/>
            <person name="Glavina del Rio T."/>
            <person name="Dalin E."/>
            <person name="Tice H."/>
            <person name="Pitluck S."/>
            <person name="Saunders E."/>
            <person name="Brettin T."/>
            <person name="Bruce D."/>
            <person name="Detter J.C."/>
            <person name="Han C."/>
            <person name="Schmutz J."/>
            <person name="Larimer F."/>
            <person name="Land M."/>
            <person name="Hauser L."/>
            <person name="Kyrpides N."/>
            <person name="Kim E."/>
            <person name="Marx C."/>
            <person name="Richardson P."/>
        </authorList>
    </citation>
    <scope>NUCLEOTIDE SEQUENCE [LARGE SCALE GENOMIC DNA]</scope>
    <source>
        <strain>PA1</strain>
    </source>
</reference>